<proteinExistence type="inferred from homology"/>
<organism>
    <name type="scientific">Staphylococcus aureus (strain USA300)</name>
    <dbReference type="NCBI Taxonomy" id="367830"/>
    <lineage>
        <taxon>Bacteria</taxon>
        <taxon>Bacillati</taxon>
        <taxon>Bacillota</taxon>
        <taxon>Bacilli</taxon>
        <taxon>Bacillales</taxon>
        <taxon>Staphylococcaceae</taxon>
        <taxon>Staphylococcus</taxon>
    </lineage>
</organism>
<reference key="1">
    <citation type="journal article" date="2006" name="Lancet">
        <title>Complete genome sequence of USA300, an epidemic clone of community-acquired meticillin-resistant Staphylococcus aureus.</title>
        <authorList>
            <person name="Diep B.A."/>
            <person name="Gill S.R."/>
            <person name="Chang R.F."/>
            <person name="Phan T.H."/>
            <person name="Chen J.H."/>
            <person name="Davidson M.G."/>
            <person name="Lin F."/>
            <person name="Lin J."/>
            <person name="Carleton H.A."/>
            <person name="Mongodin E.F."/>
            <person name="Sensabaugh G.F."/>
            <person name="Perdreau-Remington F."/>
        </authorList>
    </citation>
    <scope>NUCLEOTIDE SEQUENCE [LARGE SCALE GENOMIC DNA]</scope>
    <source>
        <strain>USA300</strain>
    </source>
</reference>
<keyword id="KW-0067">ATP-binding</keyword>
<keyword id="KW-1003">Cell membrane</keyword>
<keyword id="KW-0406">Ion transport</keyword>
<keyword id="KW-0472">Membrane</keyword>
<keyword id="KW-0547">Nucleotide-binding</keyword>
<keyword id="KW-0630">Potassium</keyword>
<keyword id="KW-0633">Potassium transport</keyword>
<keyword id="KW-0812">Transmembrane</keyword>
<keyword id="KW-1133">Transmembrane helix</keyword>
<keyword id="KW-0813">Transport</keyword>
<evidence type="ECO:0000255" key="1">
    <source>
        <dbReference type="HAMAP-Rule" id="MF_00276"/>
    </source>
</evidence>
<name>KDPC_STAA3</name>
<comment type="function">
    <text evidence="1">Part of the high-affinity ATP-driven potassium transport (or Kdp) system, which catalyzes the hydrolysis of ATP coupled with the electrogenic transport of potassium into the cytoplasm. This subunit acts as a catalytic chaperone that increases the ATP-binding affinity of the ATP-hydrolyzing subunit KdpB by the formation of a transient KdpB/KdpC/ATP ternary complex.</text>
</comment>
<comment type="subunit">
    <text evidence="1">The system is composed of three essential subunits: KdpA, KdpB and KdpC.</text>
</comment>
<comment type="subcellular location">
    <subcellularLocation>
        <location evidence="1">Cell membrane</location>
        <topology evidence="1">Single-pass membrane protein</topology>
    </subcellularLocation>
</comment>
<comment type="similarity">
    <text evidence="1">Belongs to the KdpC family.</text>
</comment>
<accession>Q2FF50</accession>
<feature type="chain" id="PRO_1000022319" description="Potassium-transporting ATPase KdpC subunit">
    <location>
        <begin position="1"/>
        <end position="186"/>
    </location>
</feature>
<feature type="transmembrane region" description="Helical" evidence="1">
    <location>
        <begin position="10"/>
        <end position="30"/>
    </location>
</feature>
<protein>
    <recommendedName>
        <fullName evidence="1">Potassium-transporting ATPase KdpC subunit</fullName>
    </recommendedName>
    <alternativeName>
        <fullName evidence="1">ATP phosphohydrolase [potassium-transporting] C chain</fullName>
    </alternativeName>
    <alternativeName>
        <fullName evidence="1">Potassium-binding and translocating subunit C</fullName>
    </alternativeName>
    <alternativeName>
        <fullName evidence="1">Potassium-translocating ATPase C chain</fullName>
    </alternativeName>
</protein>
<gene>
    <name evidence="1" type="primary">kdpC</name>
    <name type="ordered locus">SAUSA300_2032</name>
</gene>
<dbReference type="EMBL" id="CP000255">
    <property type="protein sequence ID" value="ABD20549.1"/>
    <property type="molecule type" value="Genomic_DNA"/>
</dbReference>
<dbReference type="RefSeq" id="WP_001092411.1">
    <property type="nucleotide sequence ID" value="NZ_CP027476.1"/>
</dbReference>
<dbReference type="SMR" id="Q2FF50"/>
<dbReference type="KEGG" id="saa:SAUSA300_2032"/>
<dbReference type="HOGENOM" id="CLU_077094_2_0_9"/>
<dbReference type="OMA" id="KYFWPRP"/>
<dbReference type="Proteomes" id="UP000001939">
    <property type="component" value="Chromosome"/>
</dbReference>
<dbReference type="GO" id="GO:0005886">
    <property type="term" value="C:plasma membrane"/>
    <property type="evidence" value="ECO:0007669"/>
    <property type="project" value="UniProtKB-SubCell"/>
</dbReference>
<dbReference type="GO" id="GO:0005524">
    <property type="term" value="F:ATP binding"/>
    <property type="evidence" value="ECO:0007669"/>
    <property type="project" value="UniProtKB-UniRule"/>
</dbReference>
<dbReference type="GO" id="GO:0008556">
    <property type="term" value="F:P-type potassium transmembrane transporter activity"/>
    <property type="evidence" value="ECO:0007669"/>
    <property type="project" value="InterPro"/>
</dbReference>
<dbReference type="HAMAP" id="MF_00276">
    <property type="entry name" value="KdpC"/>
    <property type="match status" value="1"/>
</dbReference>
<dbReference type="InterPro" id="IPR003820">
    <property type="entry name" value="KdpC"/>
</dbReference>
<dbReference type="NCBIfam" id="TIGR00681">
    <property type="entry name" value="kdpC"/>
    <property type="match status" value="1"/>
</dbReference>
<dbReference type="NCBIfam" id="NF010602">
    <property type="entry name" value="PRK13998.1"/>
    <property type="match status" value="1"/>
</dbReference>
<dbReference type="PANTHER" id="PTHR30042">
    <property type="entry name" value="POTASSIUM-TRANSPORTING ATPASE C CHAIN"/>
    <property type="match status" value="1"/>
</dbReference>
<dbReference type="PANTHER" id="PTHR30042:SF2">
    <property type="entry name" value="POTASSIUM-TRANSPORTING ATPASE KDPC SUBUNIT"/>
    <property type="match status" value="1"/>
</dbReference>
<dbReference type="Pfam" id="PF02669">
    <property type="entry name" value="KdpC"/>
    <property type="match status" value="1"/>
</dbReference>
<dbReference type="PIRSF" id="PIRSF001296">
    <property type="entry name" value="K_ATPase_KdpC"/>
    <property type="match status" value="1"/>
</dbReference>
<sequence>MNTIRNSICLTIITMVLCGFLFPLAITLIGQIFFYQQANGSLITYDNRIVGSKLIGQHWTETRYFHGRPSAVDYNMNPEKLYKNGVSSGGSNESNGNTELIARMKHHVKFGNSNVTIDAATSSGSGLDPHITVENALKQAPRIADARHVSTSRVADLIQHRKQRGVLTNDYVNVLELNIALDKMKD</sequence>